<dbReference type="EMBL" id="X17403">
    <property type="protein sequence ID" value="CAA35314.1"/>
    <property type="molecule type" value="Genomic_DNA"/>
</dbReference>
<dbReference type="EMBL" id="X04650">
    <property type="protein sequence ID" value="CAB37097.1"/>
    <property type="molecule type" value="Genomic_DNA"/>
</dbReference>
<dbReference type="EMBL" id="M18921">
    <property type="protein sequence ID" value="AAA45958.1"/>
    <property type="molecule type" value="Genomic_DNA"/>
</dbReference>
<dbReference type="EMBL" id="BK000394">
    <property type="protein sequence ID" value="DAA00217.1"/>
    <property type="molecule type" value="Genomic_DNA"/>
</dbReference>
<dbReference type="PIR" id="F26078">
    <property type="entry name" value="QQBEC6"/>
</dbReference>
<dbReference type="GlyCosmos" id="P09712">
    <property type="glycosylation" value="1 site, No reported glycans"/>
</dbReference>
<dbReference type="Proteomes" id="UP000008991">
    <property type="component" value="Segment"/>
</dbReference>
<dbReference type="Proteomes" id="UP000008992">
    <property type="component" value="Segment"/>
</dbReference>
<dbReference type="GO" id="GO:0044167">
    <property type="term" value="C:host cell endoplasmic reticulum membrane"/>
    <property type="evidence" value="ECO:0007669"/>
    <property type="project" value="UniProtKB-SubCell"/>
</dbReference>
<dbReference type="GO" id="GO:0016020">
    <property type="term" value="C:membrane"/>
    <property type="evidence" value="ECO:0007669"/>
    <property type="project" value="UniProtKB-KW"/>
</dbReference>
<dbReference type="GO" id="GO:0005537">
    <property type="term" value="F:D-mannose binding"/>
    <property type="evidence" value="ECO:0007669"/>
    <property type="project" value="UniProtKB-KW"/>
</dbReference>
<dbReference type="InterPro" id="IPR009237">
    <property type="entry name" value="Herpes_US2/US3"/>
</dbReference>
<dbReference type="InterPro" id="IPR014756">
    <property type="entry name" value="Ig_E-set"/>
</dbReference>
<dbReference type="Pfam" id="PF05963">
    <property type="entry name" value="Cytomega_US3"/>
    <property type="match status" value="1"/>
</dbReference>
<dbReference type="SUPFAM" id="SSF81296">
    <property type="entry name" value="E set domains"/>
    <property type="match status" value="1"/>
</dbReference>
<organismHost>
    <name type="scientific">Homo sapiens</name>
    <name type="common">Human</name>
    <dbReference type="NCBI Taxonomy" id="9606"/>
</organismHost>
<feature type="chain" id="PRO_0000223277" description="Membrane glycoprotein US3">
    <location>
        <begin position="1"/>
        <end position="186"/>
    </location>
</feature>
<feature type="signal peptide" description="Not cleaved" evidence="1">
    <location>
        <begin position="1"/>
        <end status="unknown"/>
    </location>
</feature>
<feature type="topological domain" description="Lumenal" evidence="2">
    <location>
        <begin position="1"/>
        <end position="160"/>
    </location>
</feature>
<feature type="transmembrane region" description="Helical" evidence="2">
    <location>
        <begin position="161"/>
        <end position="181"/>
    </location>
</feature>
<feature type="topological domain" description="Cytoplasmic" evidence="2">
    <location>
        <begin position="182"/>
        <end position="186"/>
    </location>
</feature>
<feature type="domain" description="Ig-like H-type">
    <location>
        <begin position="35"/>
        <end position="133"/>
    </location>
</feature>
<feature type="glycosylation site" description="N-linked (GlcNAc...) asparagine; by host" evidence="2">
    <location>
        <position position="60"/>
    </location>
</feature>
<feature type="disulfide bond" evidence="1">
    <location>
        <begin position="44"/>
        <end position="129"/>
    </location>
</feature>
<keyword id="KW-1015">Disulfide bond</keyword>
<keyword id="KW-0244">Early protein</keyword>
<keyword id="KW-0325">Glycoprotein</keyword>
<keyword id="KW-1038">Host endoplasmic reticulum</keyword>
<keyword id="KW-1043">Host membrane</keyword>
<keyword id="KW-0945">Host-virus interaction</keyword>
<keyword id="KW-0393">Immunoglobulin domain</keyword>
<keyword id="KW-0430">Lectin</keyword>
<keyword id="KW-0465">Mannose-binding</keyword>
<keyword id="KW-0472">Membrane</keyword>
<keyword id="KW-1185">Reference proteome</keyword>
<keyword id="KW-0732">Signal</keyword>
<keyword id="KW-0812">Transmembrane</keyword>
<keyword id="KW-1133">Transmembrane helix</keyword>
<keyword id="KW-0899">Viral immunoevasion</keyword>
<gene>
    <name type="primary">US3</name>
</gene>
<comment type="function">
    <text evidence="3 4">Retains, but does not degrade MHC class I heterodimers in the endoplasmic reticulum during the immediate-early period of virus infection, thereby impairing their transport and maturation. Forms a complex with beta-2-microglobulin-associated class I heavy chains, which accumulate in the ER. In consequence, infected cells are masked for immune recognition by cytotoxic T-lymphocytes.</text>
</comment>
<comment type="subunit">
    <text evidence="1">Monomer.</text>
</comment>
<comment type="subcellular location">
    <subcellularLocation>
        <location evidence="3">Host endoplasmic reticulum membrane</location>
        <topology evidence="3">Single-pass type I membrane protein</topology>
    </subcellularLocation>
</comment>
<comment type="developmental stage">
    <text evidence="3">Expressed at immediate-early period of virus infection and at reduced levels at early-late times.</text>
</comment>
<comment type="PTM">
    <text evidence="1">The signal sequence is not cleaved.</text>
</comment>
<comment type="PTM">
    <text>N-glycosylated; mostly exists in a high-mannose form.</text>
</comment>
<comment type="similarity">
    <text evidence="5">Belongs to the cytomegalovirus US2 family.</text>
</comment>
<evidence type="ECO:0000250" key="1"/>
<evidence type="ECO:0000255" key="2"/>
<evidence type="ECO:0000269" key="3">
    <source>
    </source>
</evidence>
<evidence type="ECO:0000269" key="4">
    <source>
    </source>
</evidence>
<evidence type="ECO:0000305" key="5"/>
<organism>
    <name type="scientific">Human cytomegalovirus (strain AD169)</name>
    <name type="common">HHV-5</name>
    <name type="synonym">Human herpesvirus 5</name>
    <dbReference type="NCBI Taxonomy" id="10360"/>
    <lineage>
        <taxon>Viruses</taxon>
        <taxon>Duplodnaviria</taxon>
        <taxon>Heunggongvirae</taxon>
        <taxon>Peploviricota</taxon>
        <taxon>Herviviricetes</taxon>
        <taxon>Herpesvirales</taxon>
        <taxon>Orthoherpesviridae</taxon>
        <taxon>Betaherpesvirinae</taxon>
        <taxon>Cytomegalovirus</taxon>
        <taxon>Cytomegalovirus humanbeta5</taxon>
        <taxon>Human cytomegalovirus</taxon>
    </lineage>
</organism>
<reference key="1">
    <citation type="journal article" date="1986" name="J. Mol. Biol.">
        <title>Sequence of the short unique region, short repeats, and part of the long repeats of human cytomegalovirus.</title>
        <authorList>
            <person name="Weston K.M."/>
            <person name="Barrell B.G."/>
        </authorList>
    </citation>
    <scope>NUCLEOTIDE SEQUENCE [GENOMIC DNA]</scope>
</reference>
<reference key="2">
    <citation type="journal article" date="1988" name="Virology">
        <title>An enhancer element in the short unique region of human cytomegalovirus regulates the production of a group of abundant immediate early transcripts.</title>
        <authorList>
            <person name="Weston K.M."/>
        </authorList>
    </citation>
    <scope>NUCLEOTIDE SEQUENCE [GENOMIC DNA]</scope>
</reference>
<reference key="3">
    <citation type="journal article" date="1990" name="Curr. Top. Microbiol. Immunol.">
        <title>Analysis of the protein-coding content of the sequence of human cytomegalovirus strain AD169.</title>
        <authorList>
            <person name="Chee M.S."/>
            <person name="Bankier A.T."/>
            <person name="Beck S."/>
            <person name="Bohni R."/>
            <person name="Brown C.M."/>
            <person name="Cerny R."/>
            <person name="Horsnell T."/>
            <person name="Hutchison C.A. III"/>
            <person name="Kouzarides T."/>
            <person name="Martignetti J.A."/>
            <person name="Preddie E."/>
            <person name="Satchwell S.C."/>
            <person name="Tomlinson P."/>
            <person name="Weston K.M."/>
            <person name="Barrell B.G."/>
        </authorList>
    </citation>
    <scope>NUCLEOTIDE SEQUENCE [LARGE SCALE GENOMIC DNA]</scope>
</reference>
<reference key="4">
    <citation type="journal article" date="2003" name="J. Gen. Virol.">
        <title>The human cytomegalovirus genome revisited: comparison with the chimpanzee cytomegalovirus genome.</title>
        <authorList>
            <person name="Davison A.J."/>
            <person name="Dolan A."/>
            <person name="Akter P."/>
            <person name="Addison C."/>
            <person name="Dargan D.J."/>
            <person name="Alcendor D.J."/>
            <person name="McGeoch D.J."/>
            <person name="Hayward G.S."/>
        </authorList>
    </citation>
    <scope>GENOME REANNOTATION</scope>
</reference>
<reference key="5">
    <citation type="journal article" date="2003" name="J. Gen. Virol.">
        <authorList>
            <person name="Davison A.J."/>
            <person name="Dolan A."/>
            <person name="Akter P."/>
            <person name="Addison C."/>
            <person name="Dargan D.J."/>
            <person name="Alcendor D.J."/>
            <person name="McGeoch D.J."/>
            <person name="Hayward G.S."/>
        </authorList>
    </citation>
    <scope>ERRATUM OF PUBMED:12533697</scope>
</reference>
<reference key="6">
    <citation type="journal article" date="1996" name="Proc. Natl. Acad. Sci. U.S.A.">
        <title>Human cytomegalovirus US3 impairs transport and maturation of major histocompatibility complex class I heavy chains.</title>
        <authorList>
            <person name="Jones T.R."/>
            <person name="Wiertz E.J.H.J."/>
            <person name="Sun L."/>
            <person name="Fish K.N."/>
            <person name="Nelson J.A."/>
            <person name="Ploegh H.L."/>
        </authorList>
    </citation>
    <scope>FUNCTION</scope>
</reference>
<reference key="7">
    <citation type="journal article" date="1996" name="Proc. Natl. Acad. Sci. U.S.A.">
        <title>Human cytomegalovirus inhibits antigen presentation by a sequential multistep process.</title>
        <authorList>
            <person name="Ahn K."/>
            <person name="Angulo A."/>
            <person name="Ghazal P."/>
            <person name="Peterson P.A."/>
            <person name="Yang Y."/>
            <person name="Frueh K."/>
        </authorList>
    </citation>
    <scope>FUNCTION</scope>
    <scope>SUBCELLULAR LOCATION</scope>
    <scope>DEVELOPMENTAL STAGE</scope>
</reference>
<sequence>MKPVLVLAILAVLFLRLADSVPRPLDVVVSEIRSAHFRVEENQCWFHMGMLYFKGRMSGNFTEKHFVNVGIVSQSYMDRLQVSGEQYHHDERGAYFEWNIGGHPVTHTVDMVDITLSTRWGDPKKYAACVPQVRMDYSSQTINWYLQRSMRDDNWGLLFRTLLVYLFSLVVLVLLTVGVSARLRFI</sequence>
<name>US03_HCMVA</name>
<proteinExistence type="evidence at transcript level"/>
<protein>
    <recommendedName>
        <fullName>Membrane glycoprotein US3</fullName>
    </recommendedName>
    <alternativeName>
        <fullName>Glycoprotein E</fullName>
    </alternativeName>
    <alternativeName>
        <fullName>Protein HQLF1</fullName>
    </alternativeName>
    <alternativeName>
        <fullName>gpUS3 IE</fullName>
    </alternativeName>
</protein>
<accession>P09712</accession>
<accession>Q7M6H1</accession>